<accession>A6USZ9</accession>
<reference key="1">
    <citation type="submission" date="2007-06" db="EMBL/GenBank/DDBJ databases">
        <title>Complete sequence of Methanococcus aeolicus Nankai-3.</title>
        <authorList>
            <consortium name="US DOE Joint Genome Institute"/>
            <person name="Copeland A."/>
            <person name="Lucas S."/>
            <person name="Lapidus A."/>
            <person name="Barry K."/>
            <person name="Glavina del Rio T."/>
            <person name="Dalin E."/>
            <person name="Tice H."/>
            <person name="Pitluck S."/>
            <person name="Chain P."/>
            <person name="Malfatti S."/>
            <person name="Shin M."/>
            <person name="Vergez L."/>
            <person name="Schmutz J."/>
            <person name="Larimer F."/>
            <person name="Land M."/>
            <person name="Hauser L."/>
            <person name="Kyrpides N."/>
            <person name="Lykidis A."/>
            <person name="Sieprawska-Lupa M."/>
            <person name="Whitman W.B."/>
            <person name="Richardson P."/>
        </authorList>
    </citation>
    <scope>NUCLEOTIDE SEQUENCE [LARGE SCALE GENOMIC DNA]</scope>
    <source>
        <strain>ATCC BAA-1280 / DSM 17508 / OCM 812 / Nankai-3</strain>
    </source>
</reference>
<feature type="chain" id="PRO_1000006701" description="Aspartate--tRNA(Asp/Asn) ligase">
    <location>
        <begin position="1"/>
        <end position="438"/>
    </location>
</feature>
<feature type="region of interest" description="Aspartate" evidence="1">
    <location>
        <begin position="198"/>
        <end position="201"/>
    </location>
</feature>
<feature type="binding site" evidence="1">
    <location>
        <position position="176"/>
    </location>
    <ligand>
        <name>L-aspartate</name>
        <dbReference type="ChEBI" id="CHEBI:29991"/>
    </ligand>
</feature>
<feature type="binding site" evidence="1">
    <location>
        <begin position="220"/>
        <end position="222"/>
    </location>
    <ligand>
        <name>ATP</name>
        <dbReference type="ChEBI" id="CHEBI:30616"/>
    </ligand>
</feature>
<feature type="binding site" evidence="1">
    <location>
        <position position="220"/>
    </location>
    <ligand>
        <name>L-aspartate</name>
        <dbReference type="ChEBI" id="CHEBI:29991"/>
    </ligand>
</feature>
<feature type="binding site" evidence="1">
    <location>
        <begin position="228"/>
        <end position="230"/>
    </location>
    <ligand>
        <name>ATP</name>
        <dbReference type="ChEBI" id="CHEBI:30616"/>
    </ligand>
</feature>
<feature type="binding site" evidence="1">
    <location>
        <position position="361"/>
    </location>
    <ligand>
        <name>ATP</name>
        <dbReference type="ChEBI" id="CHEBI:30616"/>
    </ligand>
</feature>
<feature type="binding site" evidence="1">
    <location>
        <position position="361"/>
    </location>
    <ligand>
        <name>Mg(2+)</name>
        <dbReference type="ChEBI" id="CHEBI:18420"/>
        <label>2</label>
    </ligand>
</feature>
<feature type="binding site" evidence="1">
    <location>
        <position position="361"/>
    </location>
    <ligand>
        <name>Mg(2+)</name>
        <dbReference type="ChEBI" id="CHEBI:18420"/>
        <label>3</label>
    </ligand>
</feature>
<feature type="binding site" evidence="1">
    <location>
        <position position="364"/>
    </location>
    <ligand>
        <name>L-aspartate</name>
        <dbReference type="ChEBI" id="CHEBI:29991"/>
    </ligand>
</feature>
<feature type="binding site" evidence="1">
    <location>
        <position position="364"/>
    </location>
    <ligand>
        <name>Mg(2+)</name>
        <dbReference type="ChEBI" id="CHEBI:18420"/>
        <label>2</label>
    </ligand>
</feature>
<feature type="binding site" evidence="1">
    <location>
        <position position="368"/>
    </location>
    <ligand>
        <name>L-aspartate</name>
        <dbReference type="ChEBI" id="CHEBI:29991"/>
    </ligand>
</feature>
<feature type="binding site" evidence="1">
    <location>
        <begin position="409"/>
        <end position="412"/>
    </location>
    <ligand>
        <name>ATP</name>
        <dbReference type="ChEBI" id="CHEBI:30616"/>
    </ligand>
</feature>
<feature type="site" description="Important for tRNA non-discrimination" evidence="1">
    <location>
        <position position="91"/>
    </location>
</feature>
<proteinExistence type="inferred from homology"/>
<keyword id="KW-0030">Aminoacyl-tRNA synthetase</keyword>
<keyword id="KW-0067">ATP-binding</keyword>
<keyword id="KW-0963">Cytoplasm</keyword>
<keyword id="KW-0436">Ligase</keyword>
<keyword id="KW-0460">Magnesium</keyword>
<keyword id="KW-0479">Metal-binding</keyword>
<keyword id="KW-0547">Nucleotide-binding</keyword>
<keyword id="KW-0648">Protein biosynthesis</keyword>
<organism>
    <name type="scientific">Methanococcus aeolicus (strain ATCC BAA-1280 / DSM 17508 / OCM 812 / Nankai-3)</name>
    <dbReference type="NCBI Taxonomy" id="419665"/>
    <lineage>
        <taxon>Archaea</taxon>
        <taxon>Methanobacteriati</taxon>
        <taxon>Methanobacteriota</taxon>
        <taxon>Methanomada group</taxon>
        <taxon>Methanococci</taxon>
        <taxon>Methanococcales</taxon>
        <taxon>Methanococcaceae</taxon>
        <taxon>Methanococcus</taxon>
    </lineage>
</organism>
<protein>
    <recommendedName>
        <fullName evidence="1">Aspartate--tRNA(Asp/Asn) ligase</fullName>
        <ecNumber evidence="1">6.1.1.23</ecNumber>
    </recommendedName>
    <alternativeName>
        <fullName evidence="1">Aspartyl-tRNA synthetase</fullName>
        <shortName evidence="1">AspRS</shortName>
    </alternativeName>
    <alternativeName>
        <fullName evidence="1">Non-discriminating aspartyl-tRNA synthetase</fullName>
        <shortName evidence="1">ND-AspRS</shortName>
    </alternativeName>
</protein>
<evidence type="ECO:0000255" key="1">
    <source>
        <dbReference type="HAMAP-Rule" id="MF_02075"/>
    </source>
</evidence>
<gene>
    <name evidence="1" type="primary">aspS</name>
    <name type="ordered locus">Maeo_0028</name>
</gene>
<name>SYDND_META3</name>
<comment type="function">
    <text evidence="1">Aspartyl-tRNA synthetase with relaxed tRNA specificity since it is able to aspartylate not only its cognate tRNA(Asp) but also tRNA(Asn). Reaction proceeds in two steps: L-aspartate is first activated by ATP to form Asp-AMP and then transferred to the acceptor end of tRNA(Asp/Asn).</text>
</comment>
<comment type="catalytic activity">
    <reaction evidence="1">
        <text>tRNA(Asx) + L-aspartate + ATP = L-aspartyl-tRNA(Asx) + AMP + diphosphate</text>
        <dbReference type="Rhea" id="RHEA:18349"/>
        <dbReference type="Rhea" id="RHEA-COMP:9710"/>
        <dbReference type="Rhea" id="RHEA-COMP:9711"/>
        <dbReference type="ChEBI" id="CHEBI:29991"/>
        <dbReference type="ChEBI" id="CHEBI:30616"/>
        <dbReference type="ChEBI" id="CHEBI:33019"/>
        <dbReference type="ChEBI" id="CHEBI:78442"/>
        <dbReference type="ChEBI" id="CHEBI:78516"/>
        <dbReference type="ChEBI" id="CHEBI:456215"/>
        <dbReference type="EC" id="6.1.1.23"/>
    </reaction>
</comment>
<comment type="cofactor">
    <cofactor evidence="1">
        <name>Mg(2+)</name>
        <dbReference type="ChEBI" id="CHEBI:18420"/>
    </cofactor>
    <text evidence="1">Binds 3 Mg(2+) cations per subunit. The strongest magnesium site (Mg1) is bound to the beta- and gamma-phosphates of ATP and four water molecules complete its coordination sphere.</text>
</comment>
<comment type="subunit">
    <text evidence="1">Homodimer.</text>
</comment>
<comment type="subcellular location">
    <subcellularLocation>
        <location evidence="1">Cytoplasm</location>
    </subcellularLocation>
</comment>
<comment type="similarity">
    <text evidence="1">Belongs to the class-II aminoacyl-tRNA synthetase family. Type 2 subfamily.</text>
</comment>
<dbReference type="EC" id="6.1.1.23" evidence="1"/>
<dbReference type="EMBL" id="CP000743">
    <property type="protein sequence ID" value="ABR55621.1"/>
    <property type="molecule type" value="Genomic_DNA"/>
</dbReference>
<dbReference type="RefSeq" id="WP_011972753.1">
    <property type="nucleotide sequence ID" value="NC_009635.1"/>
</dbReference>
<dbReference type="SMR" id="A6USZ9"/>
<dbReference type="STRING" id="419665.Maeo_0028"/>
<dbReference type="GeneID" id="5326419"/>
<dbReference type="GeneID" id="75305034"/>
<dbReference type="KEGG" id="mae:Maeo_0028"/>
<dbReference type="eggNOG" id="arCOG00406">
    <property type="taxonomic scope" value="Archaea"/>
</dbReference>
<dbReference type="HOGENOM" id="CLU_004553_2_1_2"/>
<dbReference type="OrthoDB" id="5908at2157"/>
<dbReference type="Proteomes" id="UP000001106">
    <property type="component" value="Chromosome"/>
</dbReference>
<dbReference type="GO" id="GO:0017101">
    <property type="term" value="C:aminoacyl-tRNA synthetase multienzyme complex"/>
    <property type="evidence" value="ECO:0007669"/>
    <property type="project" value="TreeGrafter"/>
</dbReference>
<dbReference type="GO" id="GO:0005829">
    <property type="term" value="C:cytosol"/>
    <property type="evidence" value="ECO:0007669"/>
    <property type="project" value="TreeGrafter"/>
</dbReference>
<dbReference type="GO" id="GO:0004815">
    <property type="term" value="F:aspartate-tRNA ligase activity"/>
    <property type="evidence" value="ECO:0007669"/>
    <property type="project" value="UniProtKB-UniRule"/>
</dbReference>
<dbReference type="GO" id="GO:0050560">
    <property type="term" value="F:aspartate-tRNA(Asn) ligase activity"/>
    <property type="evidence" value="ECO:0007669"/>
    <property type="project" value="UniProtKB-EC"/>
</dbReference>
<dbReference type="GO" id="GO:0005524">
    <property type="term" value="F:ATP binding"/>
    <property type="evidence" value="ECO:0007669"/>
    <property type="project" value="UniProtKB-UniRule"/>
</dbReference>
<dbReference type="GO" id="GO:0000287">
    <property type="term" value="F:magnesium ion binding"/>
    <property type="evidence" value="ECO:0007669"/>
    <property type="project" value="UniProtKB-UniRule"/>
</dbReference>
<dbReference type="GO" id="GO:0003723">
    <property type="term" value="F:RNA binding"/>
    <property type="evidence" value="ECO:0007669"/>
    <property type="project" value="TreeGrafter"/>
</dbReference>
<dbReference type="GO" id="GO:0006422">
    <property type="term" value="P:aspartyl-tRNA aminoacylation"/>
    <property type="evidence" value="ECO:0007669"/>
    <property type="project" value="UniProtKB-UniRule"/>
</dbReference>
<dbReference type="CDD" id="cd00776">
    <property type="entry name" value="AsxRS_core"/>
    <property type="match status" value="1"/>
</dbReference>
<dbReference type="CDD" id="cd04316">
    <property type="entry name" value="ND_PkAspRS_like_N"/>
    <property type="match status" value="1"/>
</dbReference>
<dbReference type="FunFam" id="3.30.930.10:FF:000038">
    <property type="entry name" value="Aspartate--tRNA ligase"/>
    <property type="match status" value="1"/>
</dbReference>
<dbReference type="FunFam" id="2.40.50.140:FF:000324">
    <property type="entry name" value="Aspartate--tRNA(Asp/Asn) ligase"/>
    <property type="match status" value="1"/>
</dbReference>
<dbReference type="Gene3D" id="3.30.930.10">
    <property type="entry name" value="Bira Bifunctional Protein, Domain 2"/>
    <property type="match status" value="1"/>
</dbReference>
<dbReference type="Gene3D" id="2.40.50.140">
    <property type="entry name" value="Nucleic acid-binding proteins"/>
    <property type="match status" value="1"/>
</dbReference>
<dbReference type="HAMAP" id="MF_02075">
    <property type="entry name" value="Asp_tRNA_synth_type2"/>
    <property type="match status" value="1"/>
</dbReference>
<dbReference type="InterPro" id="IPR004364">
    <property type="entry name" value="Aa-tRNA-synt_II"/>
</dbReference>
<dbReference type="InterPro" id="IPR006195">
    <property type="entry name" value="aa-tRNA-synth_II"/>
</dbReference>
<dbReference type="InterPro" id="IPR045864">
    <property type="entry name" value="aa-tRNA-synth_II/BPL/LPL"/>
</dbReference>
<dbReference type="InterPro" id="IPR004523">
    <property type="entry name" value="Asp-tRNA_synthase_2"/>
</dbReference>
<dbReference type="InterPro" id="IPR002312">
    <property type="entry name" value="Asp/Asn-tRNA-synth_IIb"/>
</dbReference>
<dbReference type="InterPro" id="IPR012340">
    <property type="entry name" value="NA-bd_OB-fold"/>
</dbReference>
<dbReference type="InterPro" id="IPR004365">
    <property type="entry name" value="NA-bd_OB_tRNA"/>
</dbReference>
<dbReference type="NCBIfam" id="TIGR00458">
    <property type="entry name" value="aspS_nondisc"/>
    <property type="match status" value="1"/>
</dbReference>
<dbReference type="NCBIfam" id="NF003483">
    <property type="entry name" value="PRK05159.1"/>
    <property type="match status" value="1"/>
</dbReference>
<dbReference type="PANTHER" id="PTHR43450:SF1">
    <property type="entry name" value="ASPARTATE--TRNA LIGASE, CYTOPLASMIC"/>
    <property type="match status" value="1"/>
</dbReference>
<dbReference type="PANTHER" id="PTHR43450">
    <property type="entry name" value="ASPARTYL-TRNA SYNTHETASE"/>
    <property type="match status" value="1"/>
</dbReference>
<dbReference type="Pfam" id="PF00152">
    <property type="entry name" value="tRNA-synt_2"/>
    <property type="match status" value="1"/>
</dbReference>
<dbReference type="Pfam" id="PF01336">
    <property type="entry name" value="tRNA_anti-codon"/>
    <property type="match status" value="1"/>
</dbReference>
<dbReference type="PRINTS" id="PR01042">
    <property type="entry name" value="TRNASYNTHASP"/>
</dbReference>
<dbReference type="SUPFAM" id="SSF55681">
    <property type="entry name" value="Class II aaRS and biotin synthetases"/>
    <property type="match status" value="1"/>
</dbReference>
<dbReference type="SUPFAM" id="SSF50249">
    <property type="entry name" value="Nucleic acid-binding proteins"/>
    <property type="match status" value="1"/>
</dbReference>
<dbReference type="PROSITE" id="PS50862">
    <property type="entry name" value="AA_TRNA_LIGASE_II"/>
    <property type="match status" value="1"/>
</dbReference>
<sequence length="438" mass="50064">MYALGDWRRTHYSSEVNSEMDGQEIIIMGWNHSIRKLGKLVFIILRDREGTIQIVAPKQKVSEETFATAKSLGKEDVMAIKGKVVANEKAPAGFEVIPIEIKILNKADTPLPLDPSEKVSADIDTRLDKRFLDLRRPKIQSLFKLRSEVLKSIRNTFHDNGFIDVDTPKLVASATEGGTELFPISYFDKEAFLGQSPQLYKQMMMAAGFDRVFEIGPIFRAEEHNTRRHLNEAISIDCEMSFADEKDAMEILEKVINNAFTDIYNNNQKELQTLGIDLKVQETPFPRIEYTEAVDMVNAKGVEMEWGEDFSRPAEAALGEMMDGFYFITDWPTEIRPFYTLPNEDNPKLCKAFDLMYKDLEISSGAQRNHKYDLLVEGIKRMGLNPEGFGTYLEAFKYGMPPHSGWGVGIERLMMIMACQQNIRECVLFPRDRQRLTP</sequence>